<gene>
    <name type="primary">wzb</name>
    <name type="ordered locus">Z3226</name>
    <name type="ordered locus">ECs2866</name>
</gene>
<accession>P0AAB3</accession>
<accession>P77153</accession>
<feature type="chain" id="PRO_0000046573" description="Low molecular weight protein-tyrosine-phosphatase Wzb">
    <location>
        <begin position="1"/>
        <end position="147"/>
    </location>
</feature>
<feature type="active site" description="Nucleophile" evidence="2">
    <location>
        <position position="9"/>
    </location>
</feature>
<feature type="active site" evidence="2">
    <location>
        <position position="15"/>
    </location>
</feature>
<feature type="active site" description="Proton donor" evidence="2">
    <location>
        <position position="115"/>
    </location>
</feature>
<comment type="function">
    <text evidence="1">Dephosphorylates Wzc. Required for the extracellular polysaccharide colanic acid synthesis. Probably involved in the export of colanic acid from the cell to medium. Involved in protection of cells against contact-dependent growth inhibition (CDI).</text>
</comment>
<comment type="catalytic activity">
    <reaction>
        <text>O-phospho-L-tyrosyl-[protein] + H2O = L-tyrosyl-[protein] + phosphate</text>
        <dbReference type="Rhea" id="RHEA:10684"/>
        <dbReference type="Rhea" id="RHEA-COMP:10136"/>
        <dbReference type="Rhea" id="RHEA-COMP:20101"/>
        <dbReference type="ChEBI" id="CHEBI:15377"/>
        <dbReference type="ChEBI" id="CHEBI:43474"/>
        <dbReference type="ChEBI" id="CHEBI:46858"/>
        <dbReference type="ChEBI" id="CHEBI:61978"/>
        <dbReference type="EC" id="3.1.3.48"/>
    </reaction>
</comment>
<comment type="pathway">
    <text>Glycan metabolism; exopolysaccharide biosynthesis.</text>
</comment>
<comment type="similarity">
    <text evidence="3">Belongs to the low molecular weight phosphotyrosine protein phosphatase family.</text>
</comment>
<protein>
    <recommendedName>
        <fullName>Low molecular weight protein-tyrosine-phosphatase Wzb</fullName>
        <ecNumber>3.1.3.48</ecNumber>
    </recommendedName>
</protein>
<keyword id="KW-0270">Exopolysaccharide synthesis</keyword>
<keyword id="KW-0378">Hydrolase</keyword>
<keyword id="KW-0904">Protein phosphatase</keyword>
<keyword id="KW-1185">Reference proteome</keyword>
<evidence type="ECO:0000250" key="1">
    <source>
        <dbReference type="UniProtKB" id="P0AAB2"/>
    </source>
</evidence>
<evidence type="ECO:0000250" key="2">
    <source>
        <dbReference type="UniProtKB" id="P11064"/>
    </source>
</evidence>
<evidence type="ECO:0000305" key="3"/>
<reference key="1">
    <citation type="journal article" date="2001" name="Nature">
        <title>Genome sequence of enterohaemorrhagic Escherichia coli O157:H7.</title>
        <authorList>
            <person name="Perna N.T."/>
            <person name="Plunkett G. III"/>
            <person name="Burland V."/>
            <person name="Mau B."/>
            <person name="Glasner J.D."/>
            <person name="Rose D.J."/>
            <person name="Mayhew G.F."/>
            <person name="Evans P.S."/>
            <person name="Gregor J."/>
            <person name="Kirkpatrick H.A."/>
            <person name="Posfai G."/>
            <person name="Hackett J."/>
            <person name="Klink S."/>
            <person name="Boutin A."/>
            <person name="Shao Y."/>
            <person name="Miller L."/>
            <person name="Grotbeck E.J."/>
            <person name="Davis N.W."/>
            <person name="Lim A."/>
            <person name="Dimalanta E.T."/>
            <person name="Potamousis K."/>
            <person name="Apodaca J."/>
            <person name="Anantharaman T.S."/>
            <person name="Lin J."/>
            <person name="Yen G."/>
            <person name="Schwartz D.C."/>
            <person name="Welch R.A."/>
            <person name="Blattner F.R."/>
        </authorList>
    </citation>
    <scope>NUCLEOTIDE SEQUENCE [LARGE SCALE GENOMIC DNA]</scope>
    <source>
        <strain>O157:H7 / EDL933 / ATCC 700927 / EHEC</strain>
    </source>
</reference>
<reference key="2">
    <citation type="journal article" date="2001" name="DNA Res.">
        <title>Complete genome sequence of enterohemorrhagic Escherichia coli O157:H7 and genomic comparison with a laboratory strain K-12.</title>
        <authorList>
            <person name="Hayashi T."/>
            <person name="Makino K."/>
            <person name="Ohnishi M."/>
            <person name="Kurokawa K."/>
            <person name="Ishii K."/>
            <person name="Yokoyama K."/>
            <person name="Han C.-G."/>
            <person name="Ohtsubo E."/>
            <person name="Nakayama K."/>
            <person name="Murata T."/>
            <person name="Tanaka M."/>
            <person name="Tobe T."/>
            <person name="Iida T."/>
            <person name="Takami H."/>
            <person name="Honda T."/>
            <person name="Sasakawa C."/>
            <person name="Ogasawara N."/>
            <person name="Yasunaga T."/>
            <person name="Kuhara S."/>
            <person name="Shiba T."/>
            <person name="Hattori M."/>
            <person name="Shinagawa H."/>
        </authorList>
    </citation>
    <scope>NUCLEOTIDE SEQUENCE [LARGE SCALE GENOMIC DNA]</scope>
    <source>
        <strain>O157:H7 / Sakai / RIMD 0509952 / EHEC</strain>
    </source>
</reference>
<name>WZB_ECO57</name>
<sequence length="147" mass="16709">MFNNILVVCVGNICRSPTAERLLQRYHPELKVESAGLGALVGKGADPTAISVAAEHQLSLEGHCARQISRRLCRNYDLILTMEKRHIERLCEMAPEMRGKVMLFGHWDNECEIPDPYRKSRETFAAVYTLLERSARQWAQALNAEQV</sequence>
<dbReference type="EC" id="3.1.3.48"/>
<dbReference type="EMBL" id="AE005174">
    <property type="protein sequence ID" value="AAG57121.1"/>
    <property type="molecule type" value="Genomic_DNA"/>
</dbReference>
<dbReference type="EMBL" id="BA000007">
    <property type="protein sequence ID" value="BAB36289.1"/>
    <property type="molecule type" value="Genomic_DNA"/>
</dbReference>
<dbReference type="PIR" id="B90987">
    <property type="entry name" value="B90987"/>
</dbReference>
<dbReference type="PIR" id="E85832">
    <property type="entry name" value="E85832"/>
</dbReference>
<dbReference type="RefSeq" id="NP_310893.1">
    <property type="nucleotide sequence ID" value="NC_002695.1"/>
</dbReference>
<dbReference type="RefSeq" id="WP_000482901.1">
    <property type="nucleotide sequence ID" value="NZ_VOAI01000013.1"/>
</dbReference>
<dbReference type="BMRB" id="P0AAB3"/>
<dbReference type="SMR" id="P0AAB3"/>
<dbReference type="STRING" id="155864.Z3226"/>
<dbReference type="GeneID" id="913690"/>
<dbReference type="GeneID" id="93775130"/>
<dbReference type="KEGG" id="ece:Z3226"/>
<dbReference type="KEGG" id="ecs:ECs_2866"/>
<dbReference type="PATRIC" id="fig|386585.9.peg.2999"/>
<dbReference type="eggNOG" id="COG0394">
    <property type="taxonomic scope" value="Bacteria"/>
</dbReference>
<dbReference type="HOGENOM" id="CLU_071415_1_1_6"/>
<dbReference type="OMA" id="YQQVTRF"/>
<dbReference type="UniPathway" id="UPA00631"/>
<dbReference type="Proteomes" id="UP000000558">
    <property type="component" value="Chromosome"/>
</dbReference>
<dbReference type="Proteomes" id="UP000002519">
    <property type="component" value="Chromosome"/>
</dbReference>
<dbReference type="GO" id="GO:0004725">
    <property type="term" value="F:protein tyrosine phosphatase activity"/>
    <property type="evidence" value="ECO:0007669"/>
    <property type="project" value="UniProtKB-EC"/>
</dbReference>
<dbReference type="GO" id="GO:0000271">
    <property type="term" value="P:polysaccharide biosynthetic process"/>
    <property type="evidence" value="ECO:0007669"/>
    <property type="project" value="UniProtKB-KW"/>
</dbReference>
<dbReference type="CDD" id="cd16343">
    <property type="entry name" value="LMWPTP"/>
    <property type="match status" value="1"/>
</dbReference>
<dbReference type="FunFam" id="3.40.50.2300:FF:000041">
    <property type="entry name" value="Low molecular weight protein-tyrosine-phosphatase"/>
    <property type="match status" value="1"/>
</dbReference>
<dbReference type="Gene3D" id="3.40.50.2300">
    <property type="match status" value="1"/>
</dbReference>
<dbReference type="InterPro" id="IPR050438">
    <property type="entry name" value="LMW_PTPase"/>
</dbReference>
<dbReference type="InterPro" id="IPR023485">
    <property type="entry name" value="Ptyr_pPase"/>
</dbReference>
<dbReference type="InterPro" id="IPR036196">
    <property type="entry name" value="Ptyr_pPase_sf"/>
</dbReference>
<dbReference type="InterPro" id="IPR017867">
    <property type="entry name" value="Tyr_phospatase_low_mol_wt"/>
</dbReference>
<dbReference type="NCBIfam" id="NF007520">
    <property type="entry name" value="PRK10126.1"/>
    <property type="match status" value="1"/>
</dbReference>
<dbReference type="PANTHER" id="PTHR11717">
    <property type="entry name" value="LOW MOLECULAR WEIGHT PROTEIN TYROSINE PHOSPHATASE"/>
    <property type="match status" value="1"/>
</dbReference>
<dbReference type="PANTHER" id="PTHR11717:SF31">
    <property type="entry name" value="LOW MOLECULAR WEIGHT PROTEIN-TYROSINE-PHOSPHATASE ETP-RELATED"/>
    <property type="match status" value="1"/>
</dbReference>
<dbReference type="Pfam" id="PF01451">
    <property type="entry name" value="LMWPc"/>
    <property type="match status" value="1"/>
</dbReference>
<dbReference type="PRINTS" id="PR00719">
    <property type="entry name" value="LMWPTPASE"/>
</dbReference>
<dbReference type="SMART" id="SM00226">
    <property type="entry name" value="LMWPc"/>
    <property type="match status" value="1"/>
</dbReference>
<dbReference type="SUPFAM" id="SSF52788">
    <property type="entry name" value="Phosphotyrosine protein phosphatases I"/>
    <property type="match status" value="1"/>
</dbReference>
<organism>
    <name type="scientific">Escherichia coli O157:H7</name>
    <dbReference type="NCBI Taxonomy" id="83334"/>
    <lineage>
        <taxon>Bacteria</taxon>
        <taxon>Pseudomonadati</taxon>
        <taxon>Pseudomonadota</taxon>
        <taxon>Gammaproteobacteria</taxon>
        <taxon>Enterobacterales</taxon>
        <taxon>Enterobacteriaceae</taxon>
        <taxon>Escherichia</taxon>
    </lineage>
</organism>
<proteinExistence type="inferred from homology"/>